<dbReference type="EC" id="4.2.3.4" evidence="1"/>
<dbReference type="EMBL" id="AE001273">
    <property type="protein sequence ID" value="AAC67965.1"/>
    <property type="molecule type" value="Genomic_DNA"/>
</dbReference>
<dbReference type="PIR" id="B71523">
    <property type="entry name" value="B71523"/>
</dbReference>
<dbReference type="RefSeq" id="NP_219878.1">
    <property type="nucleotide sequence ID" value="NC_000117.1"/>
</dbReference>
<dbReference type="RefSeq" id="WP_009871722.1">
    <property type="nucleotide sequence ID" value="NC_000117.1"/>
</dbReference>
<dbReference type="SMR" id="O84374"/>
<dbReference type="FunCoup" id="O84374">
    <property type="interactions" value="256"/>
</dbReference>
<dbReference type="STRING" id="272561.CT_369"/>
<dbReference type="EnsemblBacteria" id="AAC67965">
    <property type="protein sequence ID" value="AAC67965"/>
    <property type="gene ID" value="CT_369"/>
</dbReference>
<dbReference type="GeneID" id="884750"/>
<dbReference type="KEGG" id="ctr:CT_369"/>
<dbReference type="PATRIC" id="fig|272561.5.peg.398"/>
<dbReference type="HOGENOM" id="CLU_001201_0_1_0"/>
<dbReference type="InParanoid" id="O84374"/>
<dbReference type="OrthoDB" id="9806583at2"/>
<dbReference type="UniPathway" id="UPA00053">
    <property type="reaction ID" value="UER00085"/>
</dbReference>
<dbReference type="Proteomes" id="UP000000431">
    <property type="component" value="Chromosome"/>
</dbReference>
<dbReference type="GO" id="GO:0005737">
    <property type="term" value="C:cytoplasm"/>
    <property type="evidence" value="ECO:0007669"/>
    <property type="project" value="UniProtKB-SubCell"/>
</dbReference>
<dbReference type="GO" id="GO:0003856">
    <property type="term" value="F:3-dehydroquinate synthase activity"/>
    <property type="evidence" value="ECO:0000318"/>
    <property type="project" value="GO_Central"/>
</dbReference>
<dbReference type="GO" id="GO:0046872">
    <property type="term" value="F:metal ion binding"/>
    <property type="evidence" value="ECO:0007669"/>
    <property type="project" value="UniProtKB-KW"/>
</dbReference>
<dbReference type="GO" id="GO:0000166">
    <property type="term" value="F:nucleotide binding"/>
    <property type="evidence" value="ECO:0007669"/>
    <property type="project" value="UniProtKB-KW"/>
</dbReference>
<dbReference type="GO" id="GO:0008652">
    <property type="term" value="P:amino acid biosynthetic process"/>
    <property type="evidence" value="ECO:0007669"/>
    <property type="project" value="UniProtKB-KW"/>
</dbReference>
<dbReference type="GO" id="GO:0009073">
    <property type="term" value="P:aromatic amino acid family biosynthetic process"/>
    <property type="evidence" value="ECO:0000318"/>
    <property type="project" value="GO_Central"/>
</dbReference>
<dbReference type="GO" id="GO:0009423">
    <property type="term" value="P:chorismate biosynthetic process"/>
    <property type="evidence" value="ECO:0007669"/>
    <property type="project" value="UniProtKB-UniPathway"/>
</dbReference>
<dbReference type="CDD" id="cd08195">
    <property type="entry name" value="DHQS"/>
    <property type="match status" value="1"/>
</dbReference>
<dbReference type="FunFam" id="3.40.50.1970:FF:000007">
    <property type="entry name" value="Pentafunctional AROM polypeptide"/>
    <property type="match status" value="1"/>
</dbReference>
<dbReference type="Gene3D" id="3.40.50.1970">
    <property type="match status" value="1"/>
</dbReference>
<dbReference type="Gene3D" id="1.20.1090.10">
    <property type="entry name" value="Dehydroquinate synthase-like - alpha domain"/>
    <property type="match status" value="1"/>
</dbReference>
<dbReference type="InterPro" id="IPR050071">
    <property type="entry name" value="Dehydroquinate_synthase"/>
</dbReference>
<dbReference type="InterPro" id="IPR016037">
    <property type="entry name" value="DHQ_synth_AroB"/>
</dbReference>
<dbReference type="InterPro" id="IPR030963">
    <property type="entry name" value="DHQ_synth_fam"/>
</dbReference>
<dbReference type="InterPro" id="IPR030960">
    <property type="entry name" value="DHQS/DOIS_N"/>
</dbReference>
<dbReference type="InterPro" id="IPR056179">
    <property type="entry name" value="DHQS_C"/>
</dbReference>
<dbReference type="NCBIfam" id="TIGR01357">
    <property type="entry name" value="aroB"/>
    <property type="match status" value="1"/>
</dbReference>
<dbReference type="PANTHER" id="PTHR43622">
    <property type="entry name" value="3-DEHYDROQUINATE SYNTHASE"/>
    <property type="match status" value="1"/>
</dbReference>
<dbReference type="PANTHER" id="PTHR43622:SF7">
    <property type="entry name" value="3-DEHYDROQUINATE SYNTHASE, CHLOROPLASTIC"/>
    <property type="match status" value="1"/>
</dbReference>
<dbReference type="Pfam" id="PF01761">
    <property type="entry name" value="DHQ_synthase"/>
    <property type="match status" value="1"/>
</dbReference>
<dbReference type="Pfam" id="PF24621">
    <property type="entry name" value="DHQS_C"/>
    <property type="match status" value="1"/>
</dbReference>
<dbReference type="PIRSF" id="PIRSF001455">
    <property type="entry name" value="DHQ_synth"/>
    <property type="match status" value="1"/>
</dbReference>
<dbReference type="SUPFAM" id="SSF56796">
    <property type="entry name" value="Dehydroquinate synthase-like"/>
    <property type="match status" value="1"/>
</dbReference>
<accession>O84374</accession>
<feature type="chain" id="PRO_0000140728" description="3-dehydroquinate synthase">
    <location>
        <begin position="1"/>
        <end position="373"/>
    </location>
</feature>
<feature type="binding site" evidence="2">
    <location>
        <begin position="67"/>
        <end position="72"/>
    </location>
    <ligand>
        <name>NAD(+)</name>
        <dbReference type="ChEBI" id="CHEBI:57540"/>
    </ligand>
</feature>
<feature type="binding site" evidence="2">
    <location>
        <begin position="101"/>
        <end position="105"/>
    </location>
    <ligand>
        <name>NAD(+)</name>
        <dbReference type="ChEBI" id="CHEBI:57540"/>
    </ligand>
</feature>
<feature type="binding site" evidence="2">
    <location>
        <begin position="125"/>
        <end position="126"/>
    </location>
    <ligand>
        <name>NAD(+)</name>
        <dbReference type="ChEBI" id="CHEBI:57540"/>
    </ligand>
</feature>
<feature type="binding site" evidence="2">
    <location>
        <position position="138"/>
    </location>
    <ligand>
        <name>NAD(+)</name>
        <dbReference type="ChEBI" id="CHEBI:57540"/>
    </ligand>
</feature>
<feature type="binding site" evidence="3">
    <location>
        <position position="147"/>
    </location>
    <ligand>
        <name>NAD(+)</name>
        <dbReference type="ChEBI" id="CHEBI:57540"/>
    </ligand>
</feature>
<feature type="binding site" evidence="2">
    <location>
        <position position="180"/>
    </location>
    <ligand>
        <name>Zn(2+)</name>
        <dbReference type="ChEBI" id="CHEBI:29105"/>
    </ligand>
</feature>
<feature type="binding site" evidence="2">
    <location>
        <position position="240"/>
    </location>
    <ligand>
        <name>Zn(2+)</name>
        <dbReference type="ChEBI" id="CHEBI:29105"/>
    </ligand>
</feature>
<feature type="binding site" evidence="2">
    <location>
        <position position="256"/>
    </location>
    <ligand>
        <name>Zn(2+)</name>
        <dbReference type="ChEBI" id="CHEBI:29105"/>
    </ligand>
</feature>
<gene>
    <name type="primary">aroB</name>
    <name type="ordered locus">CT_369</name>
</gene>
<sequence length="373" mass="41153">MIELVTDSPHPIHLVDSLQNPKLFASLSTDFPLIFITNTKLNALILPPLLDLARSLGFSVETLTIPEGEETKTGDTFLSLHQQLTDLNVPRQATLIGVGGGVILDIAGFVAATHCRGMPFIAIPTTLVAMIDASIGGKNGINLNHIKNRIGSFYLPKAVWICPRKLSFLPQQELHHGIAECIKHAYIADSAILPLLQDPNALKKEDKLSLLIKKNCLCKASVVQQDVRDYAKRQILNFGHTLGHALEMLFIGKIPHSCAISVGMVLETKLSLSLGVARSPAILHSLIQDLLRYQLPVSLKDLYMRAQIPPHNCDQILSALTYDKKKQNTPLPPFVMIEEIGLAASFDGRFCQTISKHILTKVLEEEFYAMHNN</sequence>
<keyword id="KW-0028">Amino-acid biosynthesis</keyword>
<keyword id="KW-0057">Aromatic amino acid biosynthesis</keyword>
<keyword id="KW-0170">Cobalt</keyword>
<keyword id="KW-0963">Cytoplasm</keyword>
<keyword id="KW-0456">Lyase</keyword>
<keyword id="KW-0479">Metal-binding</keyword>
<keyword id="KW-0520">NAD</keyword>
<keyword id="KW-0547">Nucleotide-binding</keyword>
<keyword id="KW-1185">Reference proteome</keyword>
<keyword id="KW-0862">Zinc</keyword>
<organism>
    <name type="scientific">Chlamydia trachomatis serovar D (strain ATCC VR-885 / DSM 19411 / UW-3/Cx)</name>
    <dbReference type="NCBI Taxonomy" id="272561"/>
    <lineage>
        <taxon>Bacteria</taxon>
        <taxon>Pseudomonadati</taxon>
        <taxon>Chlamydiota</taxon>
        <taxon>Chlamydiia</taxon>
        <taxon>Chlamydiales</taxon>
        <taxon>Chlamydiaceae</taxon>
        <taxon>Chlamydia/Chlamydophila group</taxon>
        <taxon>Chlamydia</taxon>
    </lineage>
</organism>
<proteinExistence type="inferred from homology"/>
<evidence type="ECO:0000250" key="1">
    <source>
        <dbReference type="UniProtKB" id="P07639"/>
    </source>
</evidence>
<evidence type="ECO:0000250" key="2">
    <source>
        <dbReference type="UniProtKB" id="P9WPX9"/>
    </source>
</evidence>
<evidence type="ECO:0000250" key="3">
    <source>
        <dbReference type="UniProtKB" id="Q6GGU4"/>
    </source>
</evidence>
<evidence type="ECO:0000305" key="4"/>
<protein>
    <recommendedName>
        <fullName evidence="1">3-dehydroquinate synthase</fullName>
        <shortName evidence="1">DHQS</shortName>
        <ecNumber evidence="1">4.2.3.4</ecNumber>
    </recommendedName>
</protein>
<reference key="1">
    <citation type="journal article" date="1998" name="Science">
        <title>Genome sequence of an obligate intracellular pathogen of humans: Chlamydia trachomatis.</title>
        <authorList>
            <person name="Stephens R.S."/>
            <person name="Kalman S."/>
            <person name="Lammel C.J."/>
            <person name="Fan J."/>
            <person name="Marathe R."/>
            <person name="Aravind L."/>
            <person name="Mitchell W.P."/>
            <person name="Olinger L."/>
            <person name="Tatusov R.L."/>
            <person name="Zhao Q."/>
            <person name="Koonin E.V."/>
            <person name="Davis R.W."/>
        </authorList>
    </citation>
    <scope>NUCLEOTIDE SEQUENCE [LARGE SCALE GENOMIC DNA]</scope>
    <source>
        <strain>ATCC VR-885 / DSM 19411 / UW-3/Cx</strain>
    </source>
</reference>
<name>AROB_CHLTR</name>
<comment type="function">
    <text evidence="1">Catalyzes the conversion of 3-deoxy-D-arabino-heptulosonate 7-phosphate (DAHP) to dehydroquinate (DHQ).</text>
</comment>
<comment type="catalytic activity">
    <reaction evidence="1">
        <text>7-phospho-2-dehydro-3-deoxy-D-arabino-heptonate = 3-dehydroquinate + phosphate</text>
        <dbReference type="Rhea" id="RHEA:21968"/>
        <dbReference type="ChEBI" id="CHEBI:32364"/>
        <dbReference type="ChEBI" id="CHEBI:43474"/>
        <dbReference type="ChEBI" id="CHEBI:58394"/>
        <dbReference type="EC" id="4.2.3.4"/>
    </reaction>
</comment>
<comment type="cofactor">
    <cofactor evidence="1">
        <name>NAD(+)</name>
        <dbReference type="ChEBI" id="CHEBI:57540"/>
    </cofactor>
</comment>
<comment type="cofactor">
    <cofactor evidence="1">
        <name>Co(2+)</name>
        <dbReference type="ChEBI" id="CHEBI:48828"/>
    </cofactor>
    <cofactor evidence="1">
        <name>Zn(2+)</name>
        <dbReference type="ChEBI" id="CHEBI:29105"/>
    </cofactor>
    <text evidence="1">Binds 1 divalent metal cation per subunit. Can use either Co(2+) or Zn(2+).</text>
</comment>
<comment type="pathway">
    <text evidence="1">Metabolic intermediate biosynthesis; chorismate biosynthesis; chorismate from D-erythrose 4-phosphate and phosphoenolpyruvate: step 2/7.</text>
</comment>
<comment type="subcellular location">
    <subcellularLocation>
        <location evidence="1">Cytoplasm</location>
    </subcellularLocation>
</comment>
<comment type="similarity">
    <text evidence="4">Belongs to the sugar phosphate cyclases superfamily. Dehydroquinate synthase family.</text>
</comment>